<proteinExistence type="inferred from homology"/>
<organism>
    <name type="scientific">Brucella suis (strain ATCC 23445 / NCTC 10510)</name>
    <dbReference type="NCBI Taxonomy" id="470137"/>
    <lineage>
        <taxon>Bacteria</taxon>
        <taxon>Pseudomonadati</taxon>
        <taxon>Pseudomonadota</taxon>
        <taxon>Alphaproteobacteria</taxon>
        <taxon>Hyphomicrobiales</taxon>
        <taxon>Brucellaceae</taxon>
        <taxon>Brucella/Ochrobactrum group</taxon>
        <taxon>Brucella</taxon>
    </lineage>
</organism>
<protein>
    <recommendedName>
        <fullName evidence="1">Large ribosomal subunit protein uL23</fullName>
    </recommendedName>
    <alternativeName>
        <fullName evidence="2">50S ribosomal protein L23</fullName>
    </alternativeName>
</protein>
<name>RL23_BRUSI</name>
<accession>B0CH30</accession>
<keyword id="KW-0687">Ribonucleoprotein</keyword>
<keyword id="KW-0689">Ribosomal protein</keyword>
<keyword id="KW-0694">RNA-binding</keyword>
<keyword id="KW-0699">rRNA-binding</keyword>
<reference key="1">
    <citation type="submission" date="2007-12" db="EMBL/GenBank/DDBJ databases">
        <title>Brucella suis ATCC 23445 whole genome shotgun sequencing project.</title>
        <authorList>
            <person name="Setubal J.C."/>
            <person name="Bowns C."/>
            <person name="Boyle S."/>
            <person name="Crasta O.R."/>
            <person name="Czar M.J."/>
            <person name="Dharmanolla C."/>
            <person name="Gillespie J.J."/>
            <person name="Kenyon R.W."/>
            <person name="Lu J."/>
            <person name="Mane S."/>
            <person name="Mohapatra S."/>
            <person name="Nagrani S."/>
            <person name="Purkayastha A."/>
            <person name="Rajasimha H.K."/>
            <person name="Shallom J.M."/>
            <person name="Shallom S."/>
            <person name="Shukla M."/>
            <person name="Snyder E.E."/>
            <person name="Sobral B.W."/>
            <person name="Wattam A.R."/>
            <person name="Will R."/>
            <person name="Williams K."/>
            <person name="Yoo H."/>
            <person name="Bruce D."/>
            <person name="Detter C."/>
            <person name="Munk C."/>
            <person name="Brettin T.S."/>
        </authorList>
    </citation>
    <scope>NUCLEOTIDE SEQUENCE [LARGE SCALE GENOMIC DNA]</scope>
    <source>
        <strain>ATCC 23445 / NCTC 10510</strain>
    </source>
</reference>
<dbReference type="EMBL" id="CP000911">
    <property type="protein sequence ID" value="ABY38331.1"/>
    <property type="molecule type" value="Genomic_DNA"/>
</dbReference>
<dbReference type="RefSeq" id="WP_006070957.1">
    <property type="nucleotide sequence ID" value="NC_010169.1"/>
</dbReference>
<dbReference type="SMR" id="B0CH30"/>
<dbReference type="KEGG" id="bmt:BSUIS_A1280"/>
<dbReference type="HOGENOM" id="CLU_037562_3_1_5"/>
<dbReference type="Proteomes" id="UP000008545">
    <property type="component" value="Chromosome I"/>
</dbReference>
<dbReference type="GO" id="GO:1990904">
    <property type="term" value="C:ribonucleoprotein complex"/>
    <property type="evidence" value="ECO:0007669"/>
    <property type="project" value="UniProtKB-KW"/>
</dbReference>
<dbReference type="GO" id="GO:0005840">
    <property type="term" value="C:ribosome"/>
    <property type="evidence" value="ECO:0007669"/>
    <property type="project" value="UniProtKB-KW"/>
</dbReference>
<dbReference type="GO" id="GO:0019843">
    <property type="term" value="F:rRNA binding"/>
    <property type="evidence" value="ECO:0007669"/>
    <property type="project" value="UniProtKB-UniRule"/>
</dbReference>
<dbReference type="GO" id="GO:0003735">
    <property type="term" value="F:structural constituent of ribosome"/>
    <property type="evidence" value="ECO:0007669"/>
    <property type="project" value="InterPro"/>
</dbReference>
<dbReference type="GO" id="GO:0006412">
    <property type="term" value="P:translation"/>
    <property type="evidence" value="ECO:0007669"/>
    <property type="project" value="UniProtKB-UniRule"/>
</dbReference>
<dbReference type="FunFam" id="3.30.70.330:FF:000001">
    <property type="entry name" value="50S ribosomal protein L23"/>
    <property type="match status" value="1"/>
</dbReference>
<dbReference type="Gene3D" id="3.30.70.330">
    <property type="match status" value="1"/>
</dbReference>
<dbReference type="HAMAP" id="MF_01369_B">
    <property type="entry name" value="Ribosomal_uL23_B"/>
    <property type="match status" value="1"/>
</dbReference>
<dbReference type="InterPro" id="IPR012677">
    <property type="entry name" value="Nucleotide-bd_a/b_plait_sf"/>
</dbReference>
<dbReference type="InterPro" id="IPR013025">
    <property type="entry name" value="Ribosomal_uL23-like"/>
</dbReference>
<dbReference type="InterPro" id="IPR012678">
    <property type="entry name" value="Ribosomal_uL23/eL15/eS24_sf"/>
</dbReference>
<dbReference type="NCBIfam" id="NF004359">
    <property type="entry name" value="PRK05738.1-3"/>
    <property type="match status" value="1"/>
</dbReference>
<dbReference type="NCBIfam" id="NF004360">
    <property type="entry name" value="PRK05738.1-5"/>
    <property type="match status" value="1"/>
</dbReference>
<dbReference type="NCBIfam" id="NF004363">
    <property type="entry name" value="PRK05738.2-4"/>
    <property type="match status" value="1"/>
</dbReference>
<dbReference type="PANTHER" id="PTHR11620">
    <property type="entry name" value="60S RIBOSOMAL PROTEIN L23A"/>
    <property type="match status" value="1"/>
</dbReference>
<dbReference type="Pfam" id="PF00276">
    <property type="entry name" value="Ribosomal_L23"/>
    <property type="match status" value="1"/>
</dbReference>
<dbReference type="SUPFAM" id="SSF54189">
    <property type="entry name" value="Ribosomal proteins S24e, L23 and L15e"/>
    <property type="match status" value="1"/>
</dbReference>
<sequence>MTDLRHYDVIVSPVITEKSTMVSEHNQVVFNVARKATKPEIKAAVEALFGVKVTAVNTAVRKGKVKRFCGLVGRQSDVKKAIVTLAEGQSIDVSTGL</sequence>
<comment type="function">
    <text evidence="1">One of the early assembly proteins it binds 23S rRNA. One of the proteins that surrounds the polypeptide exit tunnel on the outside of the ribosome. Forms the main docking site for trigger factor binding to the ribosome.</text>
</comment>
<comment type="subunit">
    <text evidence="1">Part of the 50S ribosomal subunit. Contacts protein L29, and trigger factor when it is bound to the ribosome.</text>
</comment>
<comment type="similarity">
    <text evidence="1">Belongs to the universal ribosomal protein uL23 family.</text>
</comment>
<evidence type="ECO:0000255" key="1">
    <source>
        <dbReference type="HAMAP-Rule" id="MF_01369"/>
    </source>
</evidence>
<evidence type="ECO:0000305" key="2"/>
<gene>
    <name evidence="1" type="primary">rplW</name>
    <name type="ordered locus">BSUIS_A1280</name>
</gene>
<feature type="chain" id="PRO_1000087208" description="Large ribosomal subunit protein uL23">
    <location>
        <begin position="1"/>
        <end position="97"/>
    </location>
</feature>